<name>P54_ASFK5</name>
<sequence length="175" mass="18929">MDSEFFQPVYPRHYGECLSPTSTPSFFSTHMCTILVAIVVLIIIIIVLIYLFSSRKKKAAAPAIEEEDIQFINPYQDQQWAGATPQPGTSKPAGATTGNVGKPITDRPATDRPVTNNPVTDRLIMATGGPAAASAPSAELYTTATTQNTASQTMPAVEALRQRSTYTHKDLENSL</sequence>
<reference key="1">
    <citation type="submission" date="2003-03" db="EMBL/GenBank/DDBJ databases">
        <title>African swine fever virus genomes.</title>
        <authorList>
            <person name="Kutish G.F."/>
            <person name="Rock D.L."/>
        </authorList>
    </citation>
    <scope>NUCLEOTIDE SEQUENCE [LARGE SCALE GENOMIC DNA]</scope>
</reference>
<dbReference type="EMBL" id="AY261360">
    <property type="status" value="NOT_ANNOTATED_CDS"/>
    <property type="molecule type" value="Genomic_DNA"/>
</dbReference>
<dbReference type="SMR" id="P0C9Z8"/>
<dbReference type="Proteomes" id="UP000000861">
    <property type="component" value="Segment"/>
</dbReference>
<dbReference type="GO" id="GO:0043657">
    <property type="term" value="C:host cell"/>
    <property type="evidence" value="ECO:0007669"/>
    <property type="project" value="GOC"/>
</dbReference>
<dbReference type="GO" id="GO:0044167">
    <property type="term" value="C:host cell endoplasmic reticulum membrane"/>
    <property type="evidence" value="ECO:0007669"/>
    <property type="project" value="UniProtKB-SubCell"/>
</dbReference>
<dbReference type="GO" id="GO:0044163">
    <property type="term" value="C:host cytoskeleton"/>
    <property type="evidence" value="ECO:0007669"/>
    <property type="project" value="UniProtKB-SubCell"/>
</dbReference>
<dbReference type="GO" id="GO:0016020">
    <property type="term" value="C:membrane"/>
    <property type="evidence" value="ECO:0007669"/>
    <property type="project" value="UniProtKB-KW"/>
</dbReference>
<dbReference type="GO" id="GO:0019031">
    <property type="term" value="C:viral envelope"/>
    <property type="evidence" value="ECO:0007669"/>
    <property type="project" value="UniProtKB-KW"/>
</dbReference>
<dbReference type="GO" id="GO:0055036">
    <property type="term" value="C:virion membrane"/>
    <property type="evidence" value="ECO:0007669"/>
    <property type="project" value="UniProtKB-SubCell"/>
</dbReference>
<dbReference type="GO" id="GO:0039701">
    <property type="term" value="P:microtubule-dependent intracellular transport of viral material towards cell periphery"/>
    <property type="evidence" value="ECO:0007669"/>
    <property type="project" value="UniProtKB-KW"/>
</dbReference>
<dbReference type="InterPro" id="IPR008385">
    <property type="entry name" value="ASFV_p54"/>
</dbReference>
<dbReference type="Pfam" id="PF05568">
    <property type="entry name" value="ASFV_J13L"/>
    <property type="match status" value="1"/>
</dbReference>
<proteinExistence type="inferred from homology"/>
<gene>
    <name type="ordered locus">Ken-138</name>
</gene>
<accession>P0C9Z8</accession>
<evidence type="ECO:0000250" key="1"/>
<evidence type="ECO:0000250" key="2">
    <source>
        <dbReference type="UniProtKB" id="Q65194"/>
    </source>
</evidence>
<evidence type="ECO:0000255" key="3"/>
<evidence type="ECO:0000256" key="4">
    <source>
        <dbReference type="SAM" id="MobiDB-lite"/>
    </source>
</evidence>
<evidence type="ECO:0000305" key="5"/>
<feature type="chain" id="PRO_0000373416" description="Inner membrane protein p54">
    <location>
        <begin position="1"/>
        <end position="175"/>
    </location>
</feature>
<feature type="transmembrane region" description="Helical" evidence="3">
    <location>
        <begin position="32"/>
        <end position="52"/>
    </location>
</feature>
<feature type="region of interest" description="Disordered" evidence="4">
    <location>
        <begin position="79"/>
        <end position="121"/>
    </location>
</feature>
<feature type="region of interest" description="Interaction with host DYNLL1" evidence="1">
    <location>
        <begin position="141"/>
        <end position="153"/>
    </location>
</feature>
<feature type="compositionally biased region" description="Polar residues" evidence="4">
    <location>
        <begin position="79"/>
        <end position="89"/>
    </location>
</feature>
<keyword id="KW-0053">Apoptosis</keyword>
<keyword id="KW-1035">Host cytoplasm</keyword>
<keyword id="KW-1037">Host cytoskeleton</keyword>
<keyword id="KW-1038">Host endoplasmic reticulum</keyword>
<keyword id="KW-1043">Host membrane</keyword>
<keyword id="KW-0945">Host-virus interaction</keyword>
<keyword id="KW-0472">Membrane</keyword>
<keyword id="KW-1189">Microtubular outwards viral transport</keyword>
<keyword id="KW-0812">Transmembrane</keyword>
<keyword id="KW-1133">Transmembrane helix</keyword>
<keyword id="KW-0261">Viral envelope protein</keyword>
<keyword id="KW-1188">Viral release from host cell</keyword>
<keyword id="KW-0946">Virion</keyword>
<organism>
    <name type="scientific">African swine fever virus (isolate Pig/Kenya/KEN-50/1950)</name>
    <name type="common">ASFV</name>
    <dbReference type="NCBI Taxonomy" id="561445"/>
    <lineage>
        <taxon>Viruses</taxon>
        <taxon>Varidnaviria</taxon>
        <taxon>Bamfordvirae</taxon>
        <taxon>Nucleocytoviricota</taxon>
        <taxon>Pokkesviricetes</taxon>
        <taxon>Asfuvirales</taxon>
        <taxon>Asfarviridae</taxon>
        <taxon>Asfivirus</taxon>
        <taxon>African swine fever virus</taxon>
    </lineage>
</organism>
<organismHost>
    <name type="scientific">Ornithodoros</name>
    <name type="common">relapsing fever ticks</name>
    <dbReference type="NCBI Taxonomy" id="6937"/>
</organismHost>
<organismHost>
    <name type="scientific">Phacochoerus aethiopicus</name>
    <name type="common">Warthog</name>
    <dbReference type="NCBI Taxonomy" id="85517"/>
</organismHost>
<organismHost>
    <name type="scientific">Phacochoerus africanus</name>
    <name type="common">Warthog</name>
    <dbReference type="NCBI Taxonomy" id="41426"/>
</organismHost>
<organismHost>
    <name type="scientific">Potamochoerus larvatus</name>
    <name type="common">Bushpig</name>
    <dbReference type="NCBI Taxonomy" id="273792"/>
</organismHost>
<organismHost>
    <name type="scientific">Sus scrofa</name>
    <name type="common">Pig</name>
    <dbReference type="NCBI Taxonomy" id="9823"/>
</organismHost>
<comment type="function">
    <text evidence="2">Inner envelope protein involved, through its interaction with host dynein, in the intracellular microtubule-dependent transport of viral capsid toward viral factories (By similarity). Seems to induce caspase-3 activation and apoptosis (By similarity). Plays a role in virion morphogenesis by recruiting and transforming the host ER membranes into the precursors of the viral envelope (By similarity). Involved in virus attachment to the host cell (By similarity).</text>
</comment>
<comment type="subunit">
    <text evidence="2">Interacts with the host light chain cytoplasmic dynein DYNLL1; this interaction is critical for intracellular microtubule-dependent virus transport toward viral factories.</text>
</comment>
<comment type="subcellular location">
    <subcellularLocation>
        <location evidence="2">Virion membrane</location>
        <topology evidence="2">Single-pass membrane protein</topology>
    </subcellularLocation>
    <subcellularLocation>
        <location evidence="2">Host cytoplasm</location>
        <location evidence="2">Host cytoskeleton</location>
    </subcellularLocation>
    <subcellularLocation>
        <location evidence="2">Host endoplasmic reticulum membrane</location>
    </subcellularLocation>
    <text evidence="2">Localizes to the viral factory at 16 hpi. Host DYNLL1 and viral p54 interact at the microtubular organizing center (By similarity). Found in the inner envelope of the virus (By similarity).</text>
</comment>
<comment type="induction">
    <text evidence="5">Expressed in the late phase of the viral replicative cycle.</text>
</comment>
<comment type="similarity">
    <text evidence="5">Belongs to the asfivirus envelope protein p54 family.</text>
</comment>
<protein>
    <recommendedName>
        <fullName evidence="5">Inner membrane protein p54</fullName>
    </recommendedName>
    <alternativeName>
        <fullName evidence="2">pE183L</fullName>
    </alternativeName>
</protein>